<sequence>MAWNTNLRWRLPLLCLVLEVAMVVLFGLFVRYSPDADSSWSNEKRKGNITSDLENEFYYRYPSFQDVHVMVFLGFGFLMTFLQRYGYCALGFNFLLAALGVQWALLMQGWFQYTKDRLILLGIKNLIDADSCVASVCVAFGAVLGKVSPVQMLLMTFFQVALFSANEFLLLHVLEVKDAGGSITIHIFGAYFGLTVTWILYRHNLDHSRERQSSVYHSNLFAMIGTLFLWIYWPSFNSAMSNYGDAQHRAAINTYCSLAASVLTSVAMSSVLHKKGKLDMVHIQNATLAGGVGVGTAAEMMLMPYGALIVGFICGAVSTLGFVYLTPFLESRLRIQDTCGIHNLHGIPGLIGAIVGAVTAAYASPDGDRGFVYPFGFHNEKDEKVQGRFQAFGLLLTLAIAMVGGTIMGLILKLPFWGQAMDEDCFDDSIYWEMHEEKSSSPEDHTHKPSVPTEPVEQPTSSATLAP</sequence>
<evidence type="ECO:0000250" key="1"/>
<evidence type="ECO:0000250" key="2">
    <source>
        <dbReference type="UniProtKB" id="Q9UBD6"/>
    </source>
</evidence>
<evidence type="ECO:0000255" key="3"/>
<evidence type="ECO:0000256" key="4">
    <source>
        <dbReference type="SAM" id="MobiDB-lite"/>
    </source>
</evidence>
<evidence type="ECO:0000305" key="5"/>
<comment type="function">
    <text evidence="2">Ammonium transporter involved in the maintenance of acid-base homeostasis. Transports ammonium and its related derivative methylammonium across the plasma membrane of epithelial cells likely contributing to renal transepithelial ammonia transport and ammonia metabolism. Postulated to primarily mediate an electroneutral bidirectional transport of NH3 ammonia species according to a mechanism that implies interaction of an NH4(+) ion with acidic residues of the pore entry followed by dissociation of NH4(+) into NH3 and H(+). As a result NH3 transits through the central pore and is protonated on the extracellular side reforming NH4(+) (By similarity). May act as a CO2 channel providing for renal acid secretion (By similarity).</text>
</comment>
<comment type="catalytic activity">
    <reaction evidence="2">
        <text>NH4(+)(in) = NH4(+)(out)</text>
        <dbReference type="Rhea" id="RHEA:28747"/>
        <dbReference type="ChEBI" id="CHEBI:28938"/>
    </reaction>
    <physiologicalReaction direction="left-to-right" evidence="2">
        <dbReference type="Rhea" id="RHEA:28748"/>
    </physiologicalReaction>
    <physiologicalReaction direction="right-to-left" evidence="2">
        <dbReference type="Rhea" id="RHEA:28749"/>
    </physiologicalReaction>
</comment>
<comment type="catalytic activity">
    <reaction evidence="2">
        <text>methylamine(out) = methylamine(in)</text>
        <dbReference type="Rhea" id="RHEA:74391"/>
        <dbReference type="ChEBI" id="CHEBI:59338"/>
    </reaction>
    <physiologicalReaction direction="left-to-right" evidence="2">
        <dbReference type="Rhea" id="RHEA:74392"/>
    </physiologicalReaction>
</comment>
<comment type="catalytic activity">
    <reaction evidence="2">
        <text>CO2(out) = CO2(in)</text>
        <dbReference type="Rhea" id="RHEA:74891"/>
        <dbReference type="ChEBI" id="CHEBI:16526"/>
    </reaction>
    <physiologicalReaction direction="left-to-right" evidence="2">
        <dbReference type="Rhea" id="RHEA:74892"/>
    </physiologicalReaction>
</comment>
<comment type="subunit">
    <text evidence="2">Homotrimer.</text>
</comment>
<comment type="subcellular location">
    <subcellularLocation>
        <location evidence="2">Cell membrane</location>
        <topology evidence="3">Multi-pass membrane protein</topology>
    </subcellularLocation>
    <subcellularLocation>
        <location evidence="2">Apical cell membrane</location>
        <topology evidence="3">Multi-pass membrane protein</topology>
    </subcellularLocation>
    <text evidence="1">Also detected at the basolateral membrane and in subapical vesicles.</text>
</comment>
<comment type="PTM">
    <text evidence="1">N-glycosylated.</text>
</comment>
<comment type="similarity">
    <text evidence="5">Belongs to the ammonium transporter (TC 2.A.49) family. Rh subfamily.</text>
</comment>
<dbReference type="EMBL" id="AY013263">
    <property type="protein sequence ID" value="AAK14653.1"/>
    <property type="molecule type" value="mRNA"/>
</dbReference>
<dbReference type="RefSeq" id="NP_001076198.1">
    <property type="nucleotide sequence ID" value="NM_001082729.1"/>
</dbReference>
<dbReference type="SMR" id="Q95JD3"/>
<dbReference type="FunCoup" id="Q95JD3">
    <property type="interactions" value="43"/>
</dbReference>
<dbReference type="STRING" id="9986.ENSOCUP00000014962"/>
<dbReference type="GlyCosmos" id="Q95JD3">
    <property type="glycosylation" value="1 site, No reported glycans"/>
</dbReference>
<dbReference type="PaxDb" id="9986-ENSOCUP00000014962"/>
<dbReference type="GeneID" id="100009494"/>
<dbReference type="KEGG" id="ocu:100009494"/>
<dbReference type="CTD" id="51458"/>
<dbReference type="eggNOG" id="KOG3796">
    <property type="taxonomic scope" value="Eukaryota"/>
</dbReference>
<dbReference type="InParanoid" id="Q95JD3"/>
<dbReference type="OrthoDB" id="534912at2759"/>
<dbReference type="Proteomes" id="UP000001811">
    <property type="component" value="Unplaced"/>
</dbReference>
<dbReference type="GO" id="GO:0016324">
    <property type="term" value="C:apical plasma membrane"/>
    <property type="evidence" value="ECO:0000250"/>
    <property type="project" value="UniProtKB"/>
</dbReference>
<dbReference type="GO" id="GO:0016323">
    <property type="term" value="C:basolateral plasma membrane"/>
    <property type="evidence" value="ECO:0007669"/>
    <property type="project" value="TreeGrafter"/>
</dbReference>
<dbReference type="GO" id="GO:0031410">
    <property type="term" value="C:cytoplasmic vesicle"/>
    <property type="evidence" value="ECO:0000250"/>
    <property type="project" value="UniProtKB"/>
</dbReference>
<dbReference type="GO" id="GO:0008519">
    <property type="term" value="F:ammonium channel activity"/>
    <property type="evidence" value="ECO:0000250"/>
    <property type="project" value="UniProtKB"/>
</dbReference>
<dbReference type="GO" id="GO:0035379">
    <property type="term" value="F:carbon dioxide transmembrane transporter activity"/>
    <property type="evidence" value="ECO:0000250"/>
    <property type="project" value="UniProtKB"/>
</dbReference>
<dbReference type="GO" id="GO:0097272">
    <property type="term" value="P:ammonium homeostasis"/>
    <property type="evidence" value="ECO:0007669"/>
    <property type="project" value="TreeGrafter"/>
</dbReference>
<dbReference type="GO" id="GO:0072488">
    <property type="term" value="P:ammonium transmembrane transport"/>
    <property type="evidence" value="ECO:0000250"/>
    <property type="project" value="UniProtKB"/>
</dbReference>
<dbReference type="FunFam" id="1.10.3430.10:FF:000001">
    <property type="entry name" value="Ammonium transporter Rh type C"/>
    <property type="match status" value="1"/>
</dbReference>
<dbReference type="Gene3D" id="1.10.3430.10">
    <property type="entry name" value="Ammonium transporter AmtB like domains"/>
    <property type="match status" value="1"/>
</dbReference>
<dbReference type="InterPro" id="IPR029020">
    <property type="entry name" value="Ammonium/urea_transptr"/>
</dbReference>
<dbReference type="InterPro" id="IPR024041">
    <property type="entry name" value="NH4_transpt_AmtB-like_dom"/>
</dbReference>
<dbReference type="InterPro" id="IPR002229">
    <property type="entry name" value="RhesusRHD"/>
</dbReference>
<dbReference type="PANTHER" id="PTHR11730">
    <property type="entry name" value="AMMONIUM TRANSPORTER"/>
    <property type="match status" value="1"/>
</dbReference>
<dbReference type="PANTHER" id="PTHR11730:SF30">
    <property type="entry name" value="AMMONIUM TRANSPORTER RH TYPE C"/>
    <property type="match status" value="1"/>
</dbReference>
<dbReference type="Pfam" id="PF00909">
    <property type="entry name" value="Ammonium_transp"/>
    <property type="match status" value="1"/>
</dbReference>
<dbReference type="PRINTS" id="PR00342">
    <property type="entry name" value="RHESUSRHD"/>
</dbReference>
<dbReference type="SUPFAM" id="SSF111352">
    <property type="entry name" value="Ammonium transporter"/>
    <property type="match status" value="1"/>
</dbReference>
<keyword id="KW-0924">Ammonia transport</keyword>
<keyword id="KW-1003">Cell membrane</keyword>
<keyword id="KW-0325">Glycoprotein</keyword>
<keyword id="KW-0472">Membrane</keyword>
<keyword id="KW-1185">Reference proteome</keyword>
<keyword id="KW-0812">Transmembrane</keyword>
<keyword id="KW-1133">Transmembrane helix</keyword>
<keyword id="KW-0813">Transport</keyword>
<proteinExistence type="evidence at transcript level"/>
<protein>
    <recommendedName>
        <fullName>Ammonium transporter Rh type C</fullName>
    </recommendedName>
    <alternativeName>
        <fullName>Rhesus blood group family type C glycoprotein</fullName>
        <shortName>Rh family type C glycoprotein</shortName>
        <shortName>Rh type C glycoprotein</shortName>
    </alternativeName>
</protein>
<name>RHCG_RABIT</name>
<organism>
    <name type="scientific">Oryctolagus cuniculus</name>
    <name type="common">Rabbit</name>
    <dbReference type="NCBI Taxonomy" id="9986"/>
    <lineage>
        <taxon>Eukaryota</taxon>
        <taxon>Metazoa</taxon>
        <taxon>Chordata</taxon>
        <taxon>Craniata</taxon>
        <taxon>Vertebrata</taxon>
        <taxon>Euteleostomi</taxon>
        <taxon>Mammalia</taxon>
        <taxon>Eutheria</taxon>
        <taxon>Euarchontoglires</taxon>
        <taxon>Glires</taxon>
        <taxon>Lagomorpha</taxon>
        <taxon>Leporidae</taxon>
        <taxon>Oryctolagus</taxon>
    </lineage>
</organism>
<gene>
    <name type="primary">RHCG</name>
</gene>
<feature type="chain" id="PRO_0000283583" description="Ammonium transporter Rh type C">
    <location>
        <begin position="1"/>
        <end position="467"/>
    </location>
</feature>
<feature type="topological domain" description="Cytoplasmic" evidence="3">
    <location>
        <begin position="1"/>
        <end position="9"/>
    </location>
</feature>
<feature type="transmembrane region" description="Helical" evidence="3">
    <location>
        <begin position="10"/>
        <end position="30"/>
    </location>
</feature>
<feature type="topological domain" description="Extracellular" evidence="3">
    <location>
        <begin position="31"/>
        <end position="61"/>
    </location>
</feature>
<feature type="transmembrane region" description="Helical" evidence="3">
    <location>
        <begin position="62"/>
        <end position="82"/>
    </location>
</feature>
<feature type="topological domain" description="Cytoplasmic" evidence="3">
    <location>
        <begin position="83"/>
        <end position="86"/>
    </location>
</feature>
<feature type="transmembrane region" description="Helical" evidence="3">
    <location>
        <begin position="87"/>
        <end position="107"/>
    </location>
</feature>
<feature type="topological domain" description="Extracellular" evidence="3">
    <location>
        <begin position="108"/>
        <end position="131"/>
    </location>
</feature>
<feature type="transmembrane region" description="Helical" evidence="3">
    <location>
        <begin position="132"/>
        <end position="152"/>
    </location>
</feature>
<feature type="transmembrane region" description="Helical" evidence="3">
    <location>
        <begin position="153"/>
        <end position="173"/>
    </location>
</feature>
<feature type="topological domain" description="Extracellular" evidence="3">
    <location>
        <begin position="174"/>
        <end position="179"/>
    </location>
</feature>
<feature type="transmembrane region" description="Helical" evidence="3">
    <location>
        <begin position="180"/>
        <end position="200"/>
    </location>
</feature>
<feature type="topological domain" description="Cytoplasmic" evidence="3">
    <location>
        <begin position="201"/>
        <end position="219"/>
    </location>
</feature>
<feature type="transmembrane region" description="Helical" evidence="3">
    <location>
        <begin position="220"/>
        <end position="240"/>
    </location>
</feature>
<feature type="topological domain" description="Extracellular" evidence="3">
    <location>
        <begin position="241"/>
        <end position="251"/>
    </location>
</feature>
<feature type="transmembrane region" description="Helical" evidence="3">
    <location>
        <begin position="252"/>
        <end position="272"/>
    </location>
</feature>
<feature type="topological domain" description="Cytoplasmic" evidence="3">
    <location>
        <begin position="273"/>
        <end position="282"/>
    </location>
</feature>
<feature type="transmembrane region" description="Helical" evidence="3">
    <location>
        <begin position="283"/>
        <end position="303"/>
    </location>
</feature>
<feature type="topological domain" description="Extracellular" evidence="3">
    <location>
        <position position="304"/>
    </location>
</feature>
<feature type="transmembrane region" description="Helical" evidence="3">
    <location>
        <begin position="305"/>
        <end position="325"/>
    </location>
</feature>
<feature type="topological domain" description="Cytoplasmic" evidence="3">
    <location>
        <begin position="326"/>
        <end position="343"/>
    </location>
</feature>
<feature type="transmembrane region" description="Helical" evidence="3">
    <location>
        <begin position="344"/>
        <end position="364"/>
    </location>
</feature>
<feature type="topological domain" description="Extracellular" evidence="3">
    <location>
        <begin position="365"/>
        <end position="391"/>
    </location>
</feature>
<feature type="transmembrane region" description="Helical" evidence="3">
    <location>
        <begin position="392"/>
        <end position="412"/>
    </location>
</feature>
<feature type="topological domain" description="Cytoplasmic" evidence="3">
    <location>
        <begin position="413"/>
        <end position="467"/>
    </location>
</feature>
<feature type="region of interest" description="Disordered" evidence="4">
    <location>
        <begin position="436"/>
        <end position="467"/>
    </location>
</feature>
<feature type="compositionally biased region" description="Basic and acidic residues" evidence="4">
    <location>
        <begin position="436"/>
        <end position="447"/>
    </location>
</feature>
<feature type="compositionally biased region" description="Polar residues" evidence="4">
    <location>
        <begin position="458"/>
        <end position="467"/>
    </location>
</feature>
<feature type="glycosylation site" description="N-linked (GlcNAc...) asparagine" evidence="3">
    <location>
        <position position="48"/>
    </location>
</feature>
<reference key="1">
    <citation type="journal article" date="2001" name="Blood Cells Mol. Dis.">
        <title>New insights into the Rh superfamily of genes and proteins in erythroid cells and nonerythroid tissues.</title>
        <authorList>
            <person name="Huang C.-H."/>
            <person name="Liu P.Z."/>
        </authorList>
    </citation>
    <scope>NUCLEOTIDE SEQUENCE [MRNA]</scope>
    <source>
        <tissue>Kidney</tissue>
    </source>
</reference>
<accession>Q95JD3</accession>